<name>NADE_BUCAI</name>
<feature type="chain" id="PRO_0000152160" description="NH(3)-dependent NAD(+) synthetase">
    <location>
        <begin position="1"/>
        <end position="268"/>
    </location>
</feature>
<feature type="binding site" evidence="1">
    <location>
        <begin position="46"/>
        <end position="53"/>
    </location>
    <ligand>
        <name>ATP</name>
        <dbReference type="ChEBI" id="CHEBI:30616"/>
    </ligand>
</feature>
<feature type="binding site" evidence="1">
    <location>
        <position position="52"/>
    </location>
    <ligand>
        <name>Mg(2+)</name>
        <dbReference type="ChEBI" id="CHEBI:18420"/>
    </ligand>
</feature>
<feature type="binding site" evidence="1">
    <location>
        <position position="140"/>
    </location>
    <ligand>
        <name>deamido-NAD(+)</name>
        <dbReference type="ChEBI" id="CHEBI:58437"/>
    </ligand>
</feature>
<feature type="binding site" evidence="1">
    <location>
        <position position="160"/>
    </location>
    <ligand>
        <name>ATP</name>
        <dbReference type="ChEBI" id="CHEBI:30616"/>
    </ligand>
</feature>
<feature type="binding site" evidence="1">
    <location>
        <position position="165"/>
    </location>
    <ligand>
        <name>Mg(2+)</name>
        <dbReference type="ChEBI" id="CHEBI:18420"/>
    </ligand>
</feature>
<feature type="binding site" evidence="1">
    <location>
        <position position="173"/>
    </location>
    <ligand>
        <name>deamido-NAD(+)</name>
        <dbReference type="ChEBI" id="CHEBI:58437"/>
    </ligand>
</feature>
<feature type="binding site" evidence="1">
    <location>
        <position position="180"/>
    </location>
    <ligand>
        <name>deamido-NAD(+)</name>
        <dbReference type="ChEBI" id="CHEBI:58437"/>
    </ligand>
</feature>
<feature type="binding site" evidence="1">
    <location>
        <position position="189"/>
    </location>
    <ligand>
        <name>ATP</name>
        <dbReference type="ChEBI" id="CHEBI:30616"/>
    </ligand>
</feature>
<feature type="binding site" evidence="1">
    <location>
        <begin position="260"/>
        <end position="261"/>
    </location>
    <ligand>
        <name>deamido-NAD(+)</name>
        <dbReference type="ChEBI" id="CHEBI:58437"/>
    </ligand>
</feature>
<keyword id="KW-0067">ATP-binding</keyword>
<keyword id="KW-0436">Ligase</keyword>
<keyword id="KW-0460">Magnesium</keyword>
<keyword id="KW-0479">Metal-binding</keyword>
<keyword id="KW-0520">NAD</keyword>
<keyword id="KW-0547">Nucleotide-binding</keyword>
<keyword id="KW-1185">Reference proteome</keyword>
<protein>
    <recommendedName>
        <fullName evidence="1">NH(3)-dependent NAD(+) synthetase</fullName>
        <ecNumber evidence="1">6.3.1.5</ecNumber>
    </recommendedName>
</protein>
<accession>P57271</accession>
<proteinExistence type="inferred from homology"/>
<evidence type="ECO:0000255" key="1">
    <source>
        <dbReference type="HAMAP-Rule" id="MF_00193"/>
    </source>
</evidence>
<evidence type="ECO:0000305" key="2"/>
<gene>
    <name evidence="1" type="primary">nadE</name>
    <name type="ordered locus">BU174</name>
</gene>
<sequence length="268" mass="30430">MTLQKKIIELLGVKPAIIPEIEIKNCVDFLKKYLVNHVHIKSLIVGVSGGQDSTLTAKLCQMTAETLRKEKNDITYQFIALRLPYGIQYDEKDCQDAIRFIQPDQIFNVNIKKAVLSSEKSLKKSGVIISDYVRGNEKARERMKVQYSIAAMKQGLVVGTGHAAENITGFFTKYGDSGTDINPIAKLNKRQIRLLLKNLNCPKHLYLKKPMADLEDEHPQQDDESVLGVTYDAIDSYLEQKKIDIRSQKIIEALYLNTLHKRNLPITQ</sequence>
<organism>
    <name type="scientific">Buchnera aphidicola subsp. Acyrthosiphon pisum (strain APS)</name>
    <name type="common">Acyrthosiphon pisum symbiotic bacterium</name>
    <dbReference type="NCBI Taxonomy" id="107806"/>
    <lineage>
        <taxon>Bacteria</taxon>
        <taxon>Pseudomonadati</taxon>
        <taxon>Pseudomonadota</taxon>
        <taxon>Gammaproteobacteria</taxon>
        <taxon>Enterobacterales</taxon>
        <taxon>Erwiniaceae</taxon>
        <taxon>Buchnera</taxon>
    </lineage>
</organism>
<comment type="function">
    <text evidence="1">Catalyzes the ATP-dependent amidation of deamido-NAD to form NAD. Uses ammonia as a nitrogen source.</text>
</comment>
<comment type="catalytic activity">
    <reaction evidence="1">
        <text>deamido-NAD(+) + NH4(+) + ATP = AMP + diphosphate + NAD(+) + H(+)</text>
        <dbReference type="Rhea" id="RHEA:21188"/>
        <dbReference type="ChEBI" id="CHEBI:15378"/>
        <dbReference type="ChEBI" id="CHEBI:28938"/>
        <dbReference type="ChEBI" id="CHEBI:30616"/>
        <dbReference type="ChEBI" id="CHEBI:33019"/>
        <dbReference type="ChEBI" id="CHEBI:57540"/>
        <dbReference type="ChEBI" id="CHEBI:58437"/>
        <dbReference type="ChEBI" id="CHEBI:456215"/>
        <dbReference type="EC" id="6.3.1.5"/>
    </reaction>
</comment>
<comment type="pathway">
    <text evidence="1">Cofactor biosynthesis; NAD(+) biosynthesis; NAD(+) from deamido-NAD(+) (ammonia route): step 1/1.</text>
</comment>
<comment type="subunit">
    <text evidence="1">Homodimer.</text>
</comment>
<comment type="similarity">
    <text evidence="1 2">Belongs to the NAD synthetase family.</text>
</comment>
<reference key="1">
    <citation type="journal article" date="2000" name="Nature">
        <title>Genome sequence of the endocellular bacterial symbiont of aphids Buchnera sp. APS.</title>
        <authorList>
            <person name="Shigenobu S."/>
            <person name="Watanabe H."/>
            <person name="Hattori M."/>
            <person name="Sakaki Y."/>
            <person name="Ishikawa H."/>
        </authorList>
    </citation>
    <scope>NUCLEOTIDE SEQUENCE [LARGE SCALE GENOMIC DNA]</scope>
    <source>
        <strain>APS</strain>
    </source>
</reference>
<dbReference type="EC" id="6.3.1.5" evidence="1"/>
<dbReference type="EMBL" id="BA000003">
    <property type="protein sequence ID" value="BAB12891.1"/>
    <property type="molecule type" value="Genomic_DNA"/>
</dbReference>
<dbReference type="RefSeq" id="NP_240005.1">
    <property type="nucleotide sequence ID" value="NC_002528.1"/>
</dbReference>
<dbReference type="RefSeq" id="WP_009874131.1">
    <property type="nucleotide sequence ID" value="NC_002528.1"/>
</dbReference>
<dbReference type="SMR" id="P57271"/>
<dbReference type="STRING" id="563178.BUAP5A_171"/>
<dbReference type="EnsemblBacteria" id="BAB12891">
    <property type="protein sequence ID" value="BAB12891"/>
    <property type="gene ID" value="BAB12891"/>
</dbReference>
<dbReference type="KEGG" id="buc:BU174"/>
<dbReference type="PATRIC" id="fig|107806.10.peg.185"/>
<dbReference type="eggNOG" id="COG0171">
    <property type="taxonomic scope" value="Bacteria"/>
</dbReference>
<dbReference type="HOGENOM" id="CLU_059327_3_0_6"/>
<dbReference type="UniPathway" id="UPA00253">
    <property type="reaction ID" value="UER00333"/>
</dbReference>
<dbReference type="Proteomes" id="UP000001806">
    <property type="component" value="Chromosome"/>
</dbReference>
<dbReference type="GO" id="GO:0005737">
    <property type="term" value="C:cytoplasm"/>
    <property type="evidence" value="ECO:0007669"/>
    <property type="project" value="InterPro"/>
</dbReference>
<dbReference type="GO" id="GO:0005524">
    <property type="term" value="F:ATP binding"/>
    <property type="evidence" value="ECO:0007669"/>
    <property type="project" value="UniProtKB-UniRule"/>
</dbReference>
<dbReference type="GO" id="GO:0004359">
    <property type="term" value="F:glutaminase activity"/>
    <property type="evidence" value="ECO:0007669"/>
    <property type="project" value="InterPro"/>
</dbReference>
<dbReference type="GO" id="GO:0046872">
    <property type="term" value="F:metal ion binding"/>
    <property type="evidence" value="ECO:0007669"/>
    <property type="project" value="UniProtKB-KW"/>
</dbReference>
<dbReference type="GO" id="GO:0003952">
    <property type="term" value="F:NAD+ synthase (glutamine-hydrolyzing) activity"/>
    <property type="evidence" value="ECO:0007669"/>
    <property type="project" value="InterPro"/>
</dbReference>
<dbReference type="GO" id="GO:0008795">
    <property type="term" value="F:NAD+ synthase activity"/>
    <property type="evidence" value="ECO:0007669"/>
    <property type="project" value="UniProtKB-UniRule"/>
</dbReference>
<dbReference type="GO" id="GO:0009435">
    <property type="term" value="P:NAD biosynthetic process"/>
    <property type="evidence" value="ECO:0007669"/>
    <property type="project" value="UniProtKB-UniRule"/>
</dbReference>
<dbReference type="CDD" id="cd00553">
    <property type="entry name" value="NAD_synthase"/>
    <property type="match status" value="1"/>
</dbReference>
<dbReference type="FunFam" id="3.40.50.620:FF:000015">
    <property type="entry name" value="NH(3)-dependent NAD(+) synthetase"/>
    <property type="match status" value="1"/>
</dbReference>
<dbReference type="Gene3D" id="3.40.50.620">
    <property type="entry name" value="HUPs"/>
    <property type="match status" value="1"/>
</dbReference>
<dbReference type="HAMAP" id="MF_00193">
    <property type="entry name" value="NadE_ammonia_dep"/>
    <property type="match status" value="1"/>
</dbReference>
<dbReference type="InterPro" id="IPR022310">
    <property type="entry name" value="NAD/GMP_synthase"/>
</dbReference>
<dbReference type="InterPro" id="IPR003694">
    <property type="entry name" value="NAD_synthase"/>
</dbReference>
<dbReference type="InterPro" id="IPR022926">
    <property type="entry name" value="NH(3)-dep_NAD(+)_synth"/>
</dbReference>
<dbReference type="InterPro" id="IPR014729">
    <property type="entry name" value="Rossmann-like_a/b/a_fold"/>
</dbReference>
<dbReference type="NCBIfam" id="TIGR00552">
    <property type="entry name" value="nadE"/>
    <property type="match status" value="1"/>
</dbReference>
<dbReference type="NCBIfam" id="NF001979">
    <property type="entry name" value="PRK00768.1"/>
    <property type="match status" value="1"/>
</dbReference>
<dbReference type="PANTHER" id="PTHR23090">
    <property type="entry name" value="NH 3 /GLUTAMINE-DEPENDENT NAD + SYNTHETASE"/>
    <property type="match status" value="1"/>
</dbReference>
<dbReference type="PANTHER" id="PTHR23090:SF7">
    <property type="entry name" value="NH(3)-DEPENDENT NAD(+) SYNTHETASE"/>
    <property type="match status" value="1"/>
</dbReference>
<dbReference type="Pfam" id="PF02540">
    <property type="entry name" value="NAD_synthase"/>
    <property type="match status" value="1"/>
</dbReference>
<dbReference type="SUPFAM" id="SSF52402">
    <property type="entry name" value="Adenine nucleotide alpha hydrolases-like"/>
    <property type="match status" value="1"/>
</dbReference>